<name>FIEF_ECO81</name>
<keyword id="KW-0997">Cell inner membrane</keyword>
<keyword id="KW-1003">Cell membrane</keyword>
<keyword id="KW-0406">Ion transport</keyword>
<keyword id="KW-0408">Iron</keyword>
<keyword id="KW-0410">Iron transport</keyword>
<keyword id="KW-0472">Membrane</keyword>
<keyword id="KW-0479">Metal-binding</keyword>
<keyword id="KW-0812">Transmembrane</keyword>
<keyword id="KW-1133">Transmembrane helix</keyword>
<keyword id="KW-0813">Transport</keyword>
<keyword id="KW-0862">Zinc</keyword>
<keyword id="KW-0864">Zinc transport</keyword>
<accession>B7N2Q6</accession>
<gene>
    <name evidence="1" type="primary">fieF</name>
    <name type="ordered locus">ECED1_4617</name>
</gene>
<protein>
    <recommendedName>
        <fullName evidence="1">Cation-efflux pump FieF</fullName>
    </recommendedName>
</protein>
<comment type="function">
    <text evidence="1">Divalent metal cation transporter which exports Zn(2+), Cd(2+) and possibly Fe(2+). May be involved in zinc and iron detoxification by efflux.</text>
</comment>
<comment type="catalytic activity">
    <reaction evidence="1">
        <text>Zn(2+)(in) + H(+)(out) = Zn(2+)(out) + H(+)(in)</text>
        <dbReference type="Rhea" id="RHEA:28839"/>
        <dbReference type="ChEBI" id="CHEBI:15378"/>
        <dbReference type="ChEBI" id="CHEBI:29105"/>
    </reaction>
</comment>
<comment type="catalytic activity">
    <reaction evidence="1">
        <text>Cd(2+)(in) + H(+)(out) = Cd(2+)(out) + H(+)(in)</text>
        <dbReference type="Rhea" id="RHEA:28739"/>
        <dbReference type="ChEBI" id="CHEBI:15378"/>
        <dbReference type="ChEBI" id="CHEBI:48775"/>
    </reaction>
</comment>
<comment type="catalytic activity">
    <reaction evidence="1">
        <text>Fe(2+)(in) + H(+)(out) = Fe(2+)(out) + H(+)(in)</text>
        <dbReference type="Rhea" id="RHEA:29439"/>
        <dbReference type="ChEBI" id="CHEBI:15378"/>
        <dbReference type="ChEBI" id="CHEBI:29033"/>
    </reaction>
</comment>
<comment type="subunit">
    <text evidence="1">Homodimer.</text>
</comment>
<comment type="subcellular location">
    <subcellularLocation>
        <location evidence="1">Cell inner membrane</location>
        <topology evidence="1">Multi-pass membrane protein</topology>
    </subcellularLocation>
</comment>
<comment type="similarity">
    <text evidence="1">Belongs to the cation diffusion facilitator (CDF) transporter (TC 2.A.4) family. FieF subfamily.</text>
</comment>
<feature type="chain" id="PRO_1000184874" description="Cation-efflux pump FieF">
    <location>
        <begin position="1"/>
        <end position="300"/>
    </location>
</feature>
<feature type="transmembrane region" description="Helical" evidence="1">
    <location>
        <begin position="12"/>
        <end position="32"/>
    </location>
</feature>
<feature type="transmembrane region" description="Helical" evidence="1">
    <location>
        <begin position="39"/>
        <end position="59"/>
    </location>
</feature>
<feature type="transmembrane region" description="Helical" evidence="1">
    <location>
        <begin position="82"/>
        <end position="102"/>
    </location>
</feature>
<feature type="transmembrane region" description="Helical" evidence="1">
    <location>
        <begin position="114"/>
        <end position="134"/>
    </location>
</feature>
<feature type="transmembrane region" description="Helical" evidence="1">
    <location>
        <begin position="156"/>
        <end position="176"/>
    </location>
</feature>
<feature type="transmembrane region" description="Helical" evidence="1">
    <location>
        <begin position="178"/>
        <end position="198"/>
    </location>
</feature>
<feature type="binding site" evidence="1">
    <location>
        <position position="45"/>
    </location>
    <ligand>
        <name>Zn(2+)</name>
        <dbReference type="ChEBI" id="CHEBI:29105"/>
    </ligand>
</feature>
<feature type="binding site" evidence="1">
    <location>
        <position position="49"/>
    </location>
    <ligand>
        <name>Zn(2+)</name>
        <dbReference type="ChEBI" id="CHEBI:29105"/>
    </ligand>
</feature>
<feature type="binding site" evidence="1">
    <location>
        <position position="153"/>
    </location>
    <ligand>
        <name>Zn(2+)</name>
        <dbReference type="ChEBI" id="CHEBI:29105"/>
    </ligand>
</feature>
<feature type="binding site" evidence="1">
    <location>
        <position position="157"/>
    </location>
    <ligand>
        <name>Zn(2+)</name>
        <dbReference type="ChEBI" id="CHEBI:29105"/>
    </ligand>
</feature>
<dbReference type="EMBL" id="CU928162">
    <property type="protein sequence ID" value="CAR10725.2"/>
    <property type="molecule type" value="Genomic_DNA"/>
</dbReference>
<dbReference type="RefSeq" id="WP_001076748.1">
    <property type="nucleotide sequence ID" value="NC_011745.1"/>
</dbReference>
<dbReference type="SMR" id="B7N2Q6"/>
<dbReference type="GeneID" id="93777983"/>
<dbReference type="KEGG" id="ecq:ECED1_4617"/>
<dbReference type="HOGENOM" id="CLU_013430_3_0_6"/>
<dbReference type="Proteomes" id="UP000000748">
    <property type="component" value="Chromosome"/>
</dbReference>
<dbReference type="GO" id="GO:0005886">
    <property type="term" value="C:plasma membrane"/>
    <property type="evidence" value="ECO:0007669"/>
    <property type="project" value="UniProtKB-SubCell"/>
</dbReference>
<dbReference type="GO" id="GO:0015086">
    <property type="term" value="F:cadmium ion transmembrane transporter activity"/>
    <property type="evidence" value="ECO:0007669"/>
    <property type="project" value="UniProtKB-UniRule"/>
</dbReference>
<dbReference type="GO" id="GO:0015093">
    <property type="term" value="F:ferrous iron transmembrane transporter activity"/>
    <property type="evidence" value="ECO:0007669"/>
    <property type="project" value="TreeGrafter"/>
</dbReference>
<dbReference type="GO" id="GO:0046872">
    <property type="term" value="F:metal ion binding"/>
    <property type="evidence" value="ECO:0007669"/>
    <property type="project" value="UniProtKB-KW"/>
</dbReference>
<dbReference type="GO" id="GO:0015341">
    <property type="term" value="F:zinc efflux antiporter activity"/>
    <property type="evidence" value="ECO:0007669"/>
    <property type="project" value="TreeGrafter"/>
</dbReference>
<dbReference type="GO" id="GO:0006882">
    <property type="term" value="P:intracellular zinc ion homeostasis"/>
    <property type="evidence" value="ECO:0007669"/>
    <property type="project" value="TreeGrafter"/>
</dbReference>
<dbReference type="FunFam" id="1.20.1510.10:FF:000001">
    <property type="entry name" value="Ferrous-iron efflux pump FieF"/>
    <property type="match status" value="1"/>
</dbReference>
<dbReference type="FunFam" id="3.30.70.1350:FF:000002">
    <property type="entry name" value="Ferrous-iron efflux pump FieF"/>
    <property type="match status" value="1"/>
</dbReference>
<dbReference type="Gene3D" id="1.20.1510.10">
    <property type="entry name" value="Cation efflux protein transmembrane domain"/>
    <property type="match status" value="1"/>
</dbReference>
<dbReference type="Gene3D" id="3.30.70.1350">
    <property type="entry name" value="Cation efflux protein, cytoplasmic domain"/>
    <property type="match status" value="1"/>
</dbReference>
<dbReference type="HAMAP" id="MF_01425">
    <property type="entry name" value="Cation_efflux_FieF"/>
    <property type="match status" value="1"/>
</dbReference>
<dbReference type="InterPro" id="IPR002524">
    <property type="entry name" value="Cation_efflux"/>
</dbReference>
<dbReference type="InterPro" id="IPR027470">
    <property type="entry name" value="Cation_efflux_CTD"/>
</dbReference>
<dbReference type="InterPro" id="IPR036837">
    <property type="entry name" value="Cation_efflux_CTD_sf"/>
</dbReference>
<dbReference type="InterPro" id="IPR023783">
    <property type="entry name" value="Cation_efflux_FieF"/>
</dbReference>
<dbReference type="InterPro" id="IPR027469">
    <property type="entry name" value="Cation_efflux_TMD_sf"/>
</dbReference>
<dbReference type="InterPro" id="IPR050291">
    <property type="entry name" value="CDF_Transporter"/>
</dbReference>
<dbReference type="NCBIfam" id="TIGR01297">
    <property type="entry name" value="CDF"/>
    <property type="match status" value="1"/>
</dbReference>
<dbReference type="NCBIfam" id="NF007064">
    <property type="entry name" value="PRK09509.1"/>
    <property type="match status" value="1"/>
</dbReference>
<dbReference type="PANTHER" id="PTHR43840:SF41">
    <property type="entry name" value="CATION-EFFLUX PUMP FIEF"/>
    <property type="match status" value="1"/>
</dbReference>
<dbReference type="PANTHER" id="PTHR43840">
    <property type="entry name" value="MITOCHONDRIAL METAL TRANSPORTER 1-RELATED"/>
    <property type="match status" value="1"/>
</dbReference>
<dbReference type="Pfam" id="PF01545">
    <property type="entry name" value="Cation_efflux"/>
    <property type="match status" value="1"/>
</dbReference>
<dbReference type="Pfam" id="PF16916">
    <property type="entry name" value="ZT_dimer"/>
    <property type="match status" value="1"/>
</dbReference>
<dbReference type="SUPFAM" id="SSF160240">
    <property type="entry name" value="Cation efflux protein cytoplasmic domain-like"/>
    <property type="match status" value="1"/>
</dbReference>
<dbReference type="SUPFAM" id="SSF161111">
    <property type="entry name" value="Cation efflux protein transmembrane domain-like"/>
    <property type="match status" value="1"/>
</dbReference>
<proteinExistence type="inferred from homology"/>
<sequence length="300" mass="32913">MNQSYGRLVSRAAIAATAMASLLLLIKIFAWWYTGSVSILAALVDSLVDIGASLTNLLVVRYSLQPADDNHSFGHGKAESLAALAQSMFISGSALFLFLTGIQHLVSPTPMTDPGVGVIVTIVALICTIILVSFQRWVVRRTQSQAVRADMLHYQSDVMMNGAILLALGLSWYGWHRADALFALGIGIYILYSALRMGYEAVQSLLDRALPDEERQEIIDIVTSWPGVSGAHDLRTRQSGPTRFIQIHLEMEDSLPLVQAHMVADQVEQAILRRFPGSDVIIHQDPCSVVPREGKRSMLS</sequence>
<organism>
    <name type="scientific">Escherichia coli O81 (strain ED1a)</name>
    <dbReference type="NCBI Taxonomy" id="585397"/>
    <lineage>
        <taxon>Bacteria</taxon>
        <taxon>Pseudomonadati</taxon>
        <taxon>Pseudomonadota</taxon>
        <taxon>Gammaproteobacteria</taxon>
        <taxon>Enterobacterales</taxon>
        <taxon>Enterobacteriaceae</taxon>
        <taxon>Escherichia</taxon>
    </lineage>
</organism>
<reference key="1">
    <citation type="journal article" date="2009" name="PLoS Genet.">
        <title>Organised genome dynamics in the Escherichia coli species results in highly diverse adaptive paths.</title>
        <authorList>
            <person name="Touchon M."/>
            <person name="Hoede C."/>
            <person name="Tenaillon O."/>
            <person name="Barbe V."/>
            <person name="Baeriswyl S."/>
            <person name="Bidet P."/>
            <person name="Bingen E."/>
            <person name="Bonacorsi S."/>
            <person name="Bouchier C."/>
            <person name="Bouvet O."/>
            <person name="Calteau A."/>
            <person name="Chiapello H."/>
            <person name="Clermont O."/>
            <person name="Cruveiller S."/>
            <person name="Danchin A."/>
            <person name="Diard M."/>
            <person name="Dossat C."/>
            <person name="Karoui M.E."/>
            <person name="Frapy E."/>
            <person name="Garry L."/>
            <person name="Ghigo J.M."/>
            <person name="Gilles A.M."/>
            <person name="Johnson J."/>
            <person name="Le Bouguenec C."/>
            <person name="Lescat M."/>
            <person name="Mangenot S."/>
            <person name="Martinez-Jehanne V."/>
            <person name="Matic I."/>
            <person name="Nassif X."/>
            <person name="Oztas S."/>
            <person name="Petit M.A."/>
            <person name="Pichon C."/>
            <person name="Rouy Z."/>
            <person name="Ruf C.S."/>
            <person name="Schneider D."/>
            <person name="Tourret J."/>
            <person name="Vacherie B."/>
            <person name="Vallenet D."/>
            <person name="Medigue C."/>
            <person name="Rocha E.P.C."/>
            <person name="Denamur E."/>
        </authorList>
    </citation>
    <scope>NUCLEOTIDE SEQUENCE [LARGE SCALE GENOMIC DNA]</scope>
    <source>
        <strain>ED1a</strain>
    </source>
</reference>
<evidence type="ECO:0000255" key="1">
    <source>
        <dbReference type="HAMAP-Rule" id="MF_01425"/>
    </source>
</evidence>